<feature type="chain" id="PRO_0000269624" description="Hemin import ATP-binding protein HmuV">
    <location>
        <begin position="1"/>
        <end position="261"/>
    </location>
</feature>
<feature type="domain" description="ABC transporter" evidence="1">
    <location>
        <begin position="3"/>
        <end position="239"/>
    </location>
</feature>
<feature type="binding site" evidence="1">
    <location>
        <begin position="35"/>
        <end position="42"/>
    </location>
    <ligand>
        <name>ATP</name>
        <dbReference type="ChEBI" id="CHEBI:30616"/>
    </ligand>
</feature>
<evidence type="ECO:0000255" key="1">
    <source>
        <dbReference type="HAMAP-Rule" id="MF_01718"/>
    </source>
</evidence>
<sequence length="261" mass="27606">MSLDAADITVKLGRTPILHGIGFCAKPGEVSAIVGPNGSGKTTLLRAITGDLPFDGTVRLNGKDTSRMKPWELSAIRAVLPQSAVLAFPFTVAEVVRLGVQAGVCARDCDAPMAALSQVRLAHYADRFYHELSGGEQQRVQLARVLAQVWRPVVGGAPRWLLLDEPVASLDIANQLEVMEITRAYASAGGGVVAVMHDLNLTAMFADHLAILSGGQCLAAGPPEQVMTDAILSQAYGCALRVNTPPPHSATYVLPHAANRL</sequence>
<organism>
    <name type="scientific">Roseobacter denitrificans (strain ATCC 33942 / OCh 114)</name>
    <name type="common">Erythrobacter sp. (strain OCh 114)</name>
    <name type="synonym">Roseobacter denitrificans</name>
    <dbReference type="NCBI Taxonomy" id="375451"/>
    <lineage>
        <taxon>Bacteria</taxon>
        <taxon>Pseudomonadati</taxon>
        <taxon>Pseudomonadota</taxon>
        <taxon>Alphaproteobacteria</taxon>
        <taxon>Rhodobacterales</taxon>
        <taxon>Roseobacteraceae</taxon>
        <taxon>Roseobacter</taxon>
    </lineage>
</organism>
<proteinExistence type="inferred from homology"/>
<dbReference type="EC" id="7.6.2.-" evidence="1"/>
<dbReference type="EMBL" id="CP000362">
    <property type="protein sequence ID" value="ABG33629.1"/>
    <property type="molecule type" value="Genomic_DNA"/>
</dbReference>
<dbReference type="RefSeq" id="WP_011570239.1">
    <property type="nucleotide sequence ID" value="NC_008209.1"/>
</dbReference>
<dbReference type="SMR" id="Q160G4"/>
<dbReference type="STRING" id="375451.RD1_4191"/>
<dbReference type="KEGG" id="rde:RD1_4191"/>
<dbReference type="eggNOG" id="COG4559">
    <property type="taxonomic scope" value="Bacteria"/>
</dbReference>
<dbReference type="HOGENOM" id="CLU_000604_1_11_5"/>
<dbReference type="OrthoDB" id="9805601at2"/>
<dbReference type="Proteomes" id="UP000007029">
    <property type="component" value="Chromosome"/>
</dbReference>
<dbReference type="GO" id="GO:0005886">
    <property type="term" value="C:plasma membrane"/>
    <property type="evidence" value="ECO:0007669"/>
    <property type="project" value="UniProtKB-SubCell"/>
</dbReference>
<dbReference type="GO" id="GO:0005524">
    <property type="term" value="F:ATP binding"/>
    <property type="evidence" value="ECO:0007669"/>
    <property type="project" value="UniProtKB-KW"/>
</dbReference>
<dbReference type="GO" id="GO:0016887">
    <property type="term" value="F:ATP hydrolysis activity"/>
    <property type="evidence" value="ECO:0007669"/>
    <property type="project" value="InterPro"/>
</dbReference>
<dbReference type="CDD" id="cd03214">
    <property type="entry name" value="ABC_Iron-Siderophores_B12_Hemin"/>
    <property type="match status" value="1"/>
</dbReference>
<dbReference type="Gene3D" id="3.40.50.300">
    <property type="entry name" value="P-loop containing nucleotide triphosphate hydrolases"/>
    <property type="match status" value="1"/>
</dbReference>
<dbReference type="InterPro" id="IPR003593">
    <property type="entry name" value="AAA+_ATPase"/>
</dbReference>
<dbReference type="InterPro" id="IPR003439">
    <property type="entry name" value="ABC_transporter-like_ATP-bd"/>
</dbReference>
<dbReference type="InterPro" id="IPR017871">
    <property type="entry name" value="ABC_transporter-like_CS"/>
</dbReference>
<dbReference type="InterPro" id="IPR027417">
    <property type="entry name" value="P-loop_NTPase"/>
</dbReference>
<dbReference type="NCBIfam" id="NF010068">
    <property type="entry name" value="PRK13548.1"/>
    <property type="match status" value="1"/>
</dbReference>
<dbReference type="PANTHER" id="PTHR42794">
    <property type="entry name" value="HEMIN IMPORT ATP-BINDING PROTEIN HMUV"/>
    <property type="match status" value="1"/>
</dbReference>
<dbReference type="PANTHER" id="PTHR42794:SF1">
    <property type="entry name" value="HEMIN IMPORT ATP-BINDING PROTEIN HMUV"/>
    <property type="match status" value="1"/>
</dbReference>
<dbReference type="Pfam" id="PF00005">
    <property type="entry name" value="ABC_tran"/>
    <property type="match status" value="1"/>
</dbReference>
<dbReference type="SMART" id="SM00382">
    <property type="entry name" value="AAA"/>
    <property type="match status" value="1"/>
</dbReference>
<dbReference type="SUPFAM" id="SSF52540">
    <property type="entry name" value="P-loop containing nucleoside triphosphate hydrolases"/>
    <property type="match status" value="1"/>
</dbReference>
<dbReference type="PROSITE" id="PS00211">
    <property type="entry name" value="ABC_TRANSPORTER_1"/>
    <property type="match status" value="1"/>
</dbReference>
<dbReference type="PROSITE" id="PS50893">
    <property type="entry name" value="ABC_TRANSPORTER_2"/>
    <property type="match status" value="1"/>
</dbReference>
<dbReference type="PROSITE" id="PS51261">
    <property type="entry name" value="HMUV"/>
    <property type="match status" value="1"/>
</dbReference>
<reference key="1">
    <citation type="journal article" date="2007" name="J. Bacteriol.">
        <title>The complete genome sequence of Roseobacter denitrificans reveals a mixotrophic rather than photosynthetic metabolism.</title>
        <authorList>
            <person name="Swingley W.D."/>
            <person name="Sadekar S."/>
            <person name="Mastrian S.D."/>
            <person name="Matthies H.J."/>
            <person name="Hao J."/>
            <person name="Ramos H."/>
            <person name="Acharya C.R."/>
            <person name="Conrad A.L."/>
            <person name="Taylor H.L."/>
            <person name="Dejesa L.C."/>
            <person name="Shah M.K."/>
            <person name="O'Huallachain M.E."/>
            <person name="Lince M.T."/>
            <person name="Blankenship R.E."/>
            <person name="Beatty J.T."/>
            <person name="Touchman J.W."/>
        </authorList>
    </citation>
    <scope>NUCLEOTIDE SEQUENCE [LARGE SCALE GENOMIC DNA]</scope>
    <source>
        <strain>ATCC 33942 / OCh 114</strain>
    </source>
</reference>
<keyword id="KW-0067">ATP-binding</keyword>
<keyword id="KW-0997">Cell inner membrane</keyword>
<keyword id="KW-1003">Cell membrane</keyword>
<keyword id="KW-0472">Membrane</keyword>
<keyword id="KW-0547">Nucleotide-binding</keyword>
<keyword id="KW-1185">Reference proteome</keyword>
<keyword id="KW-1278">Translocase</keyword>
<keyword id="KW-0813">Transport</keyword>
<comment type="function">
    <text evidence="1">Part of the ABC transporter complex HmuTUV involved in hemin import. Responsible for energy coupling to the transport system.</text>
</comment>
<comment type="subunit">
    <text evidence="1">The complex is composed of two ATP-binding proteins (HmuV), two transmembrane proteins (HmuU) and a solute-binding protein (HmuT).</text>
</comment>
<comment type="subcellular location">
    <subcellularLocation>
        <location evidence="1">Cell inner membrane</location>
        <topology evidence="1">Peripheral membrane protein</topology>
    </subcellularLocation>
</comment>
<comment type="similarity">
    <text evidence="1">Belongs to the ABC transporter superfamily. Heme (hemin) importer (TC 3.A.1.14.5) family.</text>
</comment>
<protein>
    <recommendedName>
        <fullName evidence="1">Hemin import ATP-binding protein HmuV</fullName>
        <ecNumber evidence="1">7.6.2.-</ecNumber>
    </recommendedName>
</protein>
<gene>
    <name evidence="1" type="primary">hmuV</name>
    <name type="ordered locus">RD1_4191</name>
</gene>
<accession>Q160G4</accession>
<name>HMUV_ROSDO</name>